<evidence type="ECO:0000255" key="1">
    <source>
        <dbReference type="HAMAP-Rule" id="MF_00685"/>
    </source>
</evidence>
<name>GLGB_SALPA</name>
<protein>
    <recommendedName>
        <fullName evidence="1">1,4-alpha-glucan branching enzyme GlgB</fullName>
        <ecNumber evidence="1">2.4.1.18</ecNumber>
    </recommendedName>
    <alternativeName>
        <fullName evidence="1">1,4-alpha-D-glucan:1,4-alpha-D-glucan 6-glucosyl-transferase</fullName>
    </alternativeName>
    <alternativeName>
        <fullName evidence="1">Alpha-(1-&gt;4)-glucan branching enzyme</fullName>
    </alternativeName>
    <alternativeName>
        <fullName evidence="1">Glycogen branching enzyme</fullName>
        <shortName evidence="1">BE</shortName>
    </alternativeName>
</protein>
<gene>
    <name evidence="1" type="primary">glgB</name>
    <name type="ordered locus">SPA3389</name>
</gene>
<proteinExistence type="inferred from homology"/>
<feature type="chain" id="PRO_0000188739" description="1,4-alpha-glucan branching enzyme GlgB">
    <location>
        <begin position="1"/>
        <end position="728"/>
    </location>
</feature>
<feature type="active site" description="Nucleophile" evidence="1">
    <location>
        <position position="405"/>
    </location>
</feature>
<feature type="active site" description="Proton donor" evidence="1">
    <location>
        <position position="458"/>
    </location>
</feature>
<sequence length="728" mass="84280">MSSRIDRDVINALIAGHFADPFSVLGMHQTQAGLEVRALLPDATDVWVIEPKTGRKVGKLECLDARGFFCGVLPRRKNFFRYQLAVTWHGQQNLIDDPYRFGPLMQEMDAWLLSEGTHLRPYETLGAHADTMDGVTGTRFSVWAPNARRVSVVGQFNYWDGRRHPMRLRKESGIWELFIPGAHNGQLYKFELLDANGNLRIKADPYAFEAQMRPETASMICGLPEKVTPSEERQKANQFDAPISIYEVHLGSWRRHTDNNFWLSYRELADQLVPYAKWMGFTHLELLPVNEHPFDGSWGYQPTGLYAPTRRFGTLDDFRYFINAAHAAGLNVILDWVPGHFPSDEFSLAEFDGTHLYEHSDPREGYHQDWNTLIYNYGRREVSNYLVGNALYWMERFGIDALRVDAVASMIYRDYSRKEGEWIPNEFGGRENLEAIEFLRNTNRIIGEQVPGAVSMAEESTDFSGVTRPPETGGLGFWYKWNLGWMHDTLDYMKLDPVYRQYHHDKLTFGMLYNHTENFVLPLSHDEVVHGKKSILDRMPGDAWQKFANLRAYYGWMWAFPGKKLLFMGNEFAQGREWNHDASLDWHLLEGGDNWHHGVQRLVRDLNHTYRHHKALHELDFDAYGFEWLVVDDNERSVLIFVRRDKAGNEIIVASNFTPVPRHDYRFGINQPGRWREILNTDSMHYHGSNTGNGGVVHSDEIESHGRQHSLNLTLPPLATIWLMREGE</sequence>
<reference key="1">
    <citation type="journal article" date="2004" name="Nat. Genet.">
        <title>Comparison of genome degradation in Paratyphi A and Typhi, human-restricted serovars of Salmonella enterica that cause typhoid.</title>
        <authorList>
            <person name="McClelland M."/>
            <person name="Sanderson K.E."/>
            <person name="Clifton S.W."/>
            <person name="Latreille P."/>
            <person name="Porwollik S."/>
            <person name="Sabo A."/>
            <person name="Meyer R."/>
            <person name="Bieri T."/>
            <person name="Ozersky P."/>
            <person name="McLellan M."/>
            <person name="Harkins C.R."/>
            <person name="Wang C."/>
            <person name="Nguyen C."/>
            <person name="Berghoff A."/>
            <person name="Elliott G."/>
            <person name="Kohlberg S."/>
            <person name="Strong C."/>
            <person name="Du F."/>
            <person name="Carter J."/>
            <person name="Kremizki C."/>
            <person name="Layman D."/>
            <person name="Leonard S."/>
            <person name="Sun H."/>
            <person name="Fulton L."/>
            <person name="Nash W."/>
            <person name="Miner T."/>
            <person name="Minx P."/>
            <person name="Delehaunty K."/>
            <person name="Fronick C."/>
            <person name="Magrini V."/>
            <person name="Nhan M."/>
            <person name="Warren W."/>
            <person name="Florea L."/>
            <person name="Spieth J."/>
            <person name="Wilson R.K."/>
        </authorList>
    </citation>
    <scope>NUCLEOTIDE SEQUENCE [LARGE SCALE GENOMIC DNA]</scope>
    <source>
        <strain>ATCC 9150 / SARB42</strain>
    </source>
</reference>
<comment type="function">
    <text evidence="1">Catalyzes the formation of the alpha-1,6-glucosidic linkages in glycogen by scission of a 1,4-alpha-linked oligosaccharide from growing alpha-1,4-glucan chains and the subsequent attachment of the oligosaccharide to the alpha-1,6 position.</text>
</comment>
<comment type="catalytic activity">
    <reaction evidence="1">
        <text>Transfers a segment of a (1-&gt;4)-alpha-D-glucan chain to a primary hydroxy group in a similar glucan chain.</text>
        <dbReference type="EC" id="2.4.1.18"/>
    </reaction>
</comment>
<comment type="pathway">
    <text evidence="1">Glycan biosynthesis; glycogen biosynthesis.</text>
</comment>
<comment type="subunit">
    <text evidence="1">Monomer.</text>
</comment>
<comment type="similarity">
    <text evidence="1">Belongs to the glycosyl hydrolase 13 family. GlgB subfamily.</text>
</comment>
<keyword id="KW-0119">Carbohydrate metabolism</keyword>
<keyword id="KW-0320">Glycogen biosynthesis</keyword>
<keyword id="KW-0321">Glycogen metabolism</keyword>
<keyword id="KW-0328">Glycosyltransferase</keyword>
<keyword id="KW-0808">Transferase</keyword>
<accession>Q5PM06</accession>
<dbReference type="EC" id="2.4.1.18" evidence="1"/>
<dbReference type="EMBL" id="CP000026">
    <property type="protein sequence ID" value="AAV79202.1"/>
    <property type="molecule type" value="Genomic_DNA"/>
</dbReference>
<dbReference type="RefSeq" id="WP_000098559.1">
    <property type="nucleotide sequence ID" value="NC_006511.1"/>
</dbReference>
<dbReference type="SMR" id="Q5PM06"/>
<dbReference type="CAZy" id="CBM48">
    <property type="family name" value="Carbohydrate-Binding Module Family 48"/>
</dbReference>
<dbReference type="CAZy" id="GH13">
    <property type="family name" value="Glycoside Hydrolase Family 13"/>
</dbReference>
<dbReference type="KEGG" id="spt:SPA3389"/>
<dbReference type="HOGENOM" id="CLU_004245_3_2_6"/>
<dbReference type="UniPathway" id="UPA00164"/>
<dbReference type="Proteomes" id="UP000008185">
    <property type="component" value="Chromosome"/>
</dbReference>
<dbReference type="GO" id="GO:0005829">
    <property type="term" value="C:cytosol"/>
    <property type="evidence" value="ECO:0007669"/>
    <property type="project" value="TreeGrafter"/>
</dbReference>
<dbReference type="GO" id="GO:0003844">
    <property type="term" value="F:1,4-alpha-glucan branching enzyme activity"/>
    <property type="evidence" value="ECO:0007669"/>
    <property type="project" value="UniProtKB-UniRule"/>
</dbReference>
<dbReference type="GO" id="GO:0043169">
    <property type="term" value="F:cation binding"/>
    <property type="evidence" value="ECO:0007669"/>
    <property type="project" value="InterPro"/>
</dbReference>
<dbReference type="GO" id="GO:0004553">
    <property type="term" value="F:hydrolase activity, hydrolyzing O-glycosyl compounds"/>
    <property type="evidence" value="ECO:0007669"/>
    <property type="project" value="InterPro"/>
</dbReference>
<dbReference type="GO" id="GO:0005978">
    <property type="term" value="P:glycogen biosynthetic process"/>
    <property type="evidence" value="ECO:0007669"/>
    <property type="project" value="UniProtKB-UniRule"/>
</dbReference>
<dbReference type="CDD" id="cd11322">
    <property type="entry name" value="AmyAc_Glg_BE"/>
    <property type="match status" value="1"/>
</dbReference>
<dbReference type="CDD" id="cd02855">
    <property type="entry name" value="E_set_GBE_prok_N"/>
    <property type="match status" value="1"/>
</dbReference>
<dbReference type="FunFam" id="2.60.40.10:FF:000169">
    <property type="entry name" value="1,4-alpha-glucan branching enzyme GlgB"/>
    <property type="match status" value="1"/>
</dbReference>
<dbReference type="FunFam" id="2.60.40.10:FF:000331">
    <property type="entry name" value="1,4-alpha-glucan branching enzyme GlgB"/>
    <property type="match status" value="1"/>
</dbReference>
<dbReference type="FunFam" id="2.60.40.1180:FF:000002">
    <property type="entry name" value="1,4-alpha-glucan branching enzyme GlgB"/>
    <property type="match status" value="1"/>
</dbReference>
<dbReference type="FunFam" id="3.20.20.80:FF:000003">
    <property type="entry name" value="1,4-alpha-glucan branching enzyme GlgB"/>
    <property type="match status" value="1"/>
</dbReference>
<dbReference type="Gene3D" id="3.20.20.80">
    <property type="entry name" value="Glycosidases"/>
    <property type="match status" value="1"/>
</dbReference>
<dbReference type="Gene3D" id="2.60.40.1180">
    <property type="entry name" value="Golgi alpha-mannosidase II"/>
    <property type="match status" value="1"/>
</dbReference>
<dbReference type="Gene3D" id="2.60.40.10">
    <property type="entry name" value="Immunoglobulins"/>
    <property type="match status" value="2"/>
</dbReference>
<dbReference type="HAMAP" id="MF_00685">
    <property type="entry name" value="GlgB"/>
    <property type="match status" value="1"/>
</dbReference>
<dbReference type="InterPro" id="IPR006048">
    <property type="entry name" value="A-amylase/branching_C"/>
</dbReference>
<dbReference type="InterPro" id="IPR037439">
    <property type="entry name" value="Branching_enzy"/>
</dbReference>
<dbReference type="InterPro" id="IPR006407">
    <property type="entry name" value="GlgB"/>
</dbReference>
<dbReference type="InterPro" id="IPR054169">
    <property type="entry name" value="GlgB_N"/>
</dbReference>
<dbReference type="InterPro" id="IPR044143">
    <property type="entry name" value="GlgB_N_E_set_prok"/>
</dbReference>
<dbReference type="InterPro" id="IPR006047">
    <property type="entry name" value="Glyco_hydro_13_cat_dom"/>
</dbReference>
<dbReference type="InterPro" id="IPR004193">
    <property type="entry name" value="Glyco_hydro_13_N"/>
</dbReference>
<dbReference type="InterPro" id="IPR013780">
    <property type="entry name" value="Glyco_hydro_b"/>
</dbReference>
<dbReference type="InterPro" id="IPR017853">
    <property type="entry name" value="Glycoside_hydrolase_SF"/>
</dbReference>
<dbReference type="InterPro" id="IPR013783">
    <property type="entry name" value="Ig-like_fold"/>
</dbReference>
<dbReference type="InterPro" id="IPR014756">
    <property type="entry name" value="Ig_E-set"/>
</dbReference>
<dbReference type="NCBIfam" id="TIGR01515">
    <property type="entry name" value="branching_enzym"/>
    <property type="match status" value="1"/>
</dbReference>
<dbReference type="NCBIfam" id="NF003811">
    <property type="entry name" value="PRK05402.1"/>
    <property type="match status" value="1"/>
</dbReference>
<dbReference type="NCBIfam" id="NF008967">
    <property type="entry name" value="PRK12313.1"/>
    <property type="match status" value="1"/>
</dbReference>
<dbReference type="PANTHER" id="PTHR43651">
    <property type="entry name" value="1,4-ALPHA-GLUCAN-BRANCHING ENZYME"/>
    <property type="match status" value="1"/>
</dbReference>
<dbReference type="PANTHER" id="PTHR43651:SF3">
    <property type="entry name" value="1,4-ALPHA-GLUCAN-BRANCHING ENZYME"/>
    <property type="match status" value="1"/>
</dbReference>
<dbReference type="Pfam" id="PF00128">
    <property type="entry name" value="Alpha-amylase"/>
    <property type="match status" value="1"/>
</dbReference>
<dbReference type="Pfam" id="PF02806">
    <property type="entry name" value="Alpha-amylase_C"/>
    <property type="match status" value="1"/>
</dbReference>
<dbReference type="Pfam" id="PF02922">
    <property type="entry name" value="CBM_48"/>
    <property type="match status" value="1"/>
</dbReference>
<dbReference type="Pfam" id="PF22019">
    <property type="entry name" value="GlgB_N"/>
    <property type="match status" value="1"/>
</dbReference>
<dbReference type="PIRSF" id="PIRSF000463">
    <property type="entry name" value="GlgB"/>
    <property type="match status" value="1"/>
</dbReference>
<dbReference type="SMART" id="SM00642">
    <property type="entry name" value="Aamy"/>
    <property type="match status" value="1"/>
</dbReference>
<dbReference type="SUPFAM" id="SSF51445">
    <property type="entry name" value="(Trans)glycosidases"/>
    <property type="match status" value="1"/>
</dbReference>
<dbReference type="SUPFAM" id="SSF81296">
    <property type="entry name" value="E set domains"/>
    <property type="match status" value="2"/>
</dbReference>
<dbReference type="SUPFAM" id="SSF51011">
    <property type="entry name" value="Glycosyl hydrolase domain"/>
    <property type="match status" value="1"/>
</dbReference>
<organism>
    <name type="scientific">Salmonella paratyphi A (strain ATCC 9150 / SARB42)</name>
    <dbReference type="NCBI Taxonomy" id="295319"/>
    <lineage>
        <taxon>Bacteria</taxon>
        <taxon>Pseudomonadati</taxon>
        <taxon>Pseudomonadota</taxon>
        <taxon>Gammaproteobacteria</taxon>
        <taxon>Enterobacterales</taxon>
        <taxon>Enterobacteriaceae</taxon>
        <taxon>Salmonella</taxon>
    </lineage>
</organism>